<feature type="chain" id="PRO_0000335526" description="Probable translation initiation factor IF-2">
    <location>
        <begin position="1"/>
        <end position="596"/>
    </location>
</feature>
<feature type="domain" description="tr-type G">
    <location>
        <begin position="3"/>
        <end position="220"/>
    </location>
</feature>
<feature type="region of interest" description="G1" evidence="1">
    <location>
        <begin position="12"/>
        <end position="19"/>
    </location>
</feature>
<feature type="region of interest" description="G2" evidence="1">
    <location>
        <begin position="37"/>
        <end position="41"/>
    </location>
</feature>
<feature type="region of interest" description="G3" evidence="1">
    <location>
        <begin position="76"/>
        <end position="79"/>
    </location>
</feature>
<feature type="region of interest" description="G4" evidence="1">
    <location>
        <begin position="130"/>
        <end position="133"/>
    </location>
</feature>
<feature type="region of interest" description="G5" evidence="1">
    <location>
        <begin position="198"/>
        <end position="200"/>
    </location>
</feature>
<feature type="binding site" evidence="2">
    <location>
        <begin position="12"/>
        <end position="19"/>
    </location>
    <ligand>
        <name>GTP</name>
        <dbReference type="ChEBI" id="CHEBI:37565"/>
    </ligand>
</feature>
<feature type="binding site" evidence="2">
    <location>
        <begin position="76"/>
        <end position="80"/>
    </location>
    <ligand>
        <name>GTP</name>
        <dbReference type="ChEBI" id="CHEBI:37565"/>
    </ligand>
</feature>
<feature type="binding site" evidence="2">
    <location>
        <begin position="130"/>
        <end position="133"/>
    </location>
    <ligand>
        <name>GTP</name>
        <dbReference type="ChEBI" id="CHEBI:37565"/>
    </ligand>
</feature>
<organism>
    <name type="scientific">Methanobrevibacter smithii (strain ATCC 35061 / DSM 861 / OCM 144 / PS)</name>
    <dbReference type="NCBI Taxonomy" id="420247"/>
    <lineage>
        <taxon>Archaea</taxon>
        <taxon>Methanobacteriati</taxon>
        <taxon>Methanobacteriota</taxon>
        <taxon>Methanomada group</taxon>
        <taxon>Methanobacteria</taxon>
        <taxon>Methanobacteriales</taxon>
        <taxon>Methanobacteriaceae</taxon>
        <taxon>Methanobrevibacter</taxon>
    </lineage>
</organism>
<accession>A5UJM9</accession>
<gene>
    <name evidence="2" type="primary">infB</name>
    <name type="ordered locus">Msm_0202</name>
</gene>
<proteinExistence type="inferred from homology"/>
<sequence>MKIRSPIVSVLGHVDHGKTTLLDYIRGSTIAAKEAGGITQHIGATEIPNDTIENICGDFISKLAIKDLIPGLFFIDTPGHAAFTSLRKRGGALADLAVLILDVNDGFKPQTYEALNILKMYKTPFIVVANKIDRLFGWEVHEGASFRETFSNQAKSVQQDLDNKIYEIVGELHKEGFQSERFDRVSNFASQISIIPISAKTGEGVIEVLAMLLGLAQEYLTEQLEIDENAPAKGTVLEIKEETGLGVTLDAIIYDGVLRTNDEIALMLSSEDVLVTKIRSILRPLPLEEMRDSKKKFRKLDEVVAAAGIKVAAPHLDDVVSGSPLRVLSEDTDVEQEILNEIDNITIDTEDEGILVKADTIGSLEAVVKLLREMDIPIRAADIGDVNRRDIINSSIAYDENELHGAIIAFNVDVHPNSEEDLNNSEVKLFSGDVIYQILEEYEEWVKQKQEDKKKSFYDAIIKPAKFVSLPKLVFRQSKPAIIGIESLSGTLKQGQQLINKDGHVVGSIASMEDKGETLPDISRGQRVAMAIKDAIVGKDFEEGDELYVDIPEKHYKYIEREFKDKLTEDEFETLYEFLEIKRKQDSDWGSFGLFE</sequence>
<protein>
    <recommendedName>
        <fullName evidence="2">Probable translation initiation factor IF-2</fullName>
    </recommendedName>
</protein>
<keyword id="KW-0342">GTP-binding</keyword>
<keyword id="KW-0396">Initiation factor</keyword>
<keyword id="KW-0547">Nucleotide-binding</keyword>
<keyword id="KW-0648">Protein biosynthesis</keyword>
<evidence type="ECO:0000250" key="1"/>
<evidence type="ECO:0000255" key="2">
    <source>
        <dbReference type="HAMAP-Rule" id="MF_00100"/>
    </source>
</evidence>
<comment type="function">
    <text evidence="2">Function in general translation initiation by promoting the binding of the formylmethionine-tRNA to ribosomes. Seems to function along with eIF-2.</text>
</comment>
<comment type="similarity">
    <text evidence="2">Belongs to the TRAFAC class translation factor GTPase superfamily. Classic translation factor GTPase family. IF-2 subfamily.</text>
</comment>
<name>IF2P_METS3</name>
<reference key="1">
    <citation type="journal article" date="2007" name="Proc. Natl. Acad. Sci. U.S.A.">
        <title>Genomic and metabolic adaptations of Methanobrevibacter smithii to the human gut.</title>
        <authorList>
            <person name="Samuel B.S."/>
            <person name="Hansen E.E."/>
            <person name="Manchester J.K."/>
            <person name="Coutinho P.M."/>
            <person name="Henrissat B."/>
            <person name="Fulton R."/>
            <person name="Latreille P."/>
            <person name="Kim K."/>
            <person name="Wilson R.K."/>
            <person name="Gordon J.I."/>
        </authorList>
    </citation>
    <scope>NUCLEOTIDE SEQUENCE [LARGE SCALE GENOMIC DNA]</scope>
    <source>
        <strain>ATCC 35061 / DSM 861 / OCM 144 / PS</strain>
    </source>
</reference>
<dbReference type="EMBL" id="CP000678">
    <property type="protein sequence ID" value="ABQ86407.1"/>
    <property type="molecule type" value="Genomic_DNA"/>
</dbReference>
<dbReference type="RefSeq" id="WP_011953751.1">
    <property type="nucleotide sequence ID" value="NZ_CP117965.1"/>
</dbReference>
<dbReference type="SMR" id="A5UJM9"/>
<dbReference type="STRING" id="420247.Msm_0202"/>
<dbReference type="EnsemblBacteria" id="ABQ86407">
    <property type="protein sequence ID" value="ABQ86407"/>
    <property type="gene ID" value="Msm_0202"/>
</dbReference>
<dbReference type="GeneID" id="78816826"/>
<dbReference type="KEGG" id="msi:Msm_0202"/>
<dbReference type="PATRIC" id="fig|420247.28.peg.206"/>
<dbReference type="eggNOG" id="arCOG01560">
    <property type="taxonomic scope" value="Archaea"/>
</dbReference>
<dbReference type="HOGENOM" id="CLU_002656_3_3_2"/>
<dbReference type="Proteomes" id="UP000001992">
    <property type="component" value="Chromosome"/>
</dbReference>
<dbReference type="GO" id="GO:0005737">
    <property type="term" value="C:cytoplasm"/>
    <property type="evidence" value="ECO:0007669"/>
    <property type="project" value="TreeGrafter"/>
</dbReference>
<dbReference type="GO" id="GO:0005525">
    <property type="term" value="F:GTP binding"/>
    <property type="evidence" value="ECO:0007669"/>
    <property type="project" value="UniProtKB-KW"/>
</dbReference>
<dbReference type="GO" id="GO:0003924">
    <property type="term" value="F:GTPase activity"/>
    <property type="evidence" value="ECO:0007669"/>
    <property type="project" value="UniProtKB-UniRule"/>
</dbReference>
<dbReference type="GO" id="GO:0003743">
    <property type="term" value="F:translation initiation factor activity"/>
    <property type="evidence" value="ECO:0007669"/>
    <property type="project" value="UniProtKB-UniRule"/>
</dbReference>
<dbReference type="CDD" id="cd03703">
    <property type="entry name" value="aeIF5B_II"/>
    <property type="match status" value="1"/>
</dbReference>
<dbReference type="CDD" id="cd16266">
    <property type="entry name" value="IF2_aeIF5B_IV"/>
    <property type="match status" value="1"/>
</dbReference>
<dbReference type="CDD" id="cd01887">
    <property type="entry name" value="IF2_eIF5B"/>
    <property type="match status" value="1"/>
</dbReference>
<dbReference type="FunFam" id="3.40.50.300:FF:000112">
    <property type="entry name" value="Eukaryotic translation initiation factor 5B"/>
    <property type="match status" value="1"/>
</dbReference>
<dbReference type="FunFam" id="3.40.50.10050:FF:000001">
    <property type="entry name" value="Translation initiation factor IF-2"/>
    <property type="match status" value="1"/>
</dbReference>
<dbReference type="Gene3D" id="3.40.50.300">
    <property type="entry name" value="P-loop containing nucleotide triphosphate hydrolases"/>
    <property type="match status" value="1"/>
</dbReference>
<dbReference type="Gene3D" id="2.40.30.10">
    <property type="entry name" value="Translation factors"/>
    <property type="match status" value="2"/>
</dbReference>
<dbReference type="Gene3D" id="3.40.50.10050">
    <property type="entry name" value="Translation initiation factor IF- 2, domain 3"/>
    <property type="match status" value="1"/>
</dbReference>
<dbReference type="HAMAP" id="MF_00100_A">
    <property type="entry name" value="IF_2_A"/>
    <property type="match status" value="1"/>
</dbReference>
<dbReference type="InterPro" id="IPR029459">
    <property type="entry name" value="EFTU-type"/>
</dbReference>
<dbReference type="InterPro" id="IPR027417">
    <property type="entry name" value="P-loop_NTPase"/>
</dbReference>
<dbReference type="InterPro" id="IPR005225">
    <property type="entry name" value="Small_GTP-bd"/>
</dbReference>
<dbReference type="InterPro" id="IPR000795">
    <property type="entry name" value="T_Tr_GTP-bd_dom"/>
</dbReference>
<dbReference type="InterPro" id="IPR004544">
    <property type="entry name" value="TF_aIF-2_arc"/>
</dbReference>
<dbReference type="InterPro" id="IPR015760">
    <property type="entry name" value="TIF_IF2"/>
</dbReference>
<dbReference type="InterPro" id="IPR023115">
    <property type="entry name" value="TIF_IF2_dom3"/>
</dbReference>
<dbReference type="InterPro" id="IPR036925">
    <property type="entry name" value="TIF_IF2_dom3_sf"/>
</dbReference>
<dbReference type="InterPro" id="IPR009000">
    <property type="entry name" value="Transl_B-barrel_sf"/>
</dbReference>
<dbReference type="NCBIfam" id="TIGR00491">
    <property type="entry name" value="aIF-2"/>
    <property type="match status" value="1"/>
</dbReference>
<dbReference type="NCBIfam" id="NF003078">
    <property type="entry name" value="PRK04004.1"/>
    <property type="match status" value="1"/>
</dbReference>
<dbReference type="NCBIfam" id="TIGR00231">
    <property type="entry name" value="small_GTP"/>
    <property type="match status" value="1"/>
</dbReference>
<dbReference type="PANTHER" id="PTHR43381:SF4">
    <property type="entry name" value="EUKARYOTIC TRANSLATION INITIATION FACTOR 5B"/>
    <property type="match status" value="1"/>
</dbReference>
<dbReference type="PANTHER" id="PTHR43381">
    <property type="entry name" value="TRANSLATION INITIATION FACTOR IF-2-RELATED"/>
    <property type="match status" value="1"/>
</dbReference>
<dbReference type="Pfam" id="PF00009">
    <property type="entry name" value="GTP_EFTU"/>
    <property type="match status" value="1"/>
</dbReference>
<dbReference type="Pfam" id="PF14578">
    <property type="entry name" value="GTP_EFTU_D4"/>
    <property type="match status" value="1"/>
</dbReference>
<dbReference type="Pfam" id="PF11987">
    <property type="entry name" value="IF-2"/>
    <property type="match status" value="1"/>
</dbReference>
<dbReference type="PRINTS" id="PR00315">
    <property type="entry name" value="ELONGATNFCT"/>
</dbReference>
<dbReference type="SUPFAM" id="SSF52156">
    <property type="entry name" value="Initiation factor IF2/eIF5b, domain 3"/>
    <property type="match status" value="1"/>
</dbReference>
<dbReference type="SUPFAM" id="SSF52540">
    <property type="entry name" value="P-loop containing nucleoside triphosphate hydrolases"/>
    <property type="match status" value="1"/>
</dbReference>
<dbReference type="SUPFAM" id="SSF50447">
    <property type="entry name" value="Translation proteins"/>
    <property type="match status" value="1"/>
</dbReference>
<dbReference type="PROSITE" id="PS51722">
    <property type="entry name" value="G_TR_2"/>
    <property type="match status" value="1"/>
</dbReference>